<evidence type="ECO:0000255" key="1">
    <source>
        <dbReference type="HAMAP-Rule" id="MF_00203"/>
    </source>
</evidence>
<evidence type="ECO:0000305" key="2"/>
<dbReference type="EMBL" id="J03294">
    <property type="protein sequence ID" value="AAA87316.1"/>
    <property type="molecule type" value="Genomic_DNA"/>
</dbReference>
<dbReference type="EMBL" id="Z75208">
    <property type="protein sequence ID" value="CAA99578.1"/>
    <property type="molecule type" value="Genomic_DNA"/>
</dbReference>
<dbReference type="EMBL" id="AL009126">
    <property type="protein sequence ID" value="CAB14809.2"/>
    <property type="molecule type" value="Genomic_DNA"/>
</dbReference>
<dbReference type="PIR" id="A37192">
    <property type="entry name" value="A37192"/>
</dbReference>
<dbReference type="RefSeq" id="NP_390727.2">
    <property type="nucleotide sequence ID" value="NC_000964.3"/>
</dbReference>
<dbReference type="RefSeq" id="WP_003246045.1">
    <property type="nucleotide sequence ID" value="NZ_OZ025638.1"/>
</dbReference>
<dbReference type="SMR" id="P14951"/>
<dbReference type="FunCoup" id="P14951">
    <property type="interactions" value="438"/>
</dbReference>
<dbReference type="STRING" id="224308.BSU28490"/>
<dbReference type="PaxDb" id="224308-BSU28490"/>
<dbReference type="EnsemblBacteria" id="CAB14809">
    <property type="protein sequence ID" value="CAB14809"/>
    <property type="gene ID" value="BSU_28490"/>
</dbReference>
<dbReference type="GeneID" id="937729"/>
<dbReference type="KEGG" id="bsu:BSU28490"/>
<dbReference type="PATRIC" id="fig|224308.179.peg.3094"/>
<dbReference type="eggNOG" id="COG0322">
    <property type="taxonomic scope" value="Bacteria"/>
</dbReference>
<dbReference type="InParanoid" id="P14951"/>
<dbReference type="OrthoDB" id="9804933at2"/>
<dbReference type="PhylomeDB" id="P14951"/>
<dbReference type="BioCyc" id="BSUB:BSU28490-MONOMER"/>
<dbReference type="Proteomes" id="UP000001570">
    <property type="component" value="Chromosome"/>
</dbReference>
<dbReference type="GO" id="GO:0005737">
    <property type="term" value="C:cytoplasm"/>
    <property type="evidence" value="ECO:0007669"/>
    <property type="project" value="UniProtKB-SubCell"/>
</dbReference>
<dbReference type="GO" id="GO:0009380">
    <property type="term" value="C:excinuclease repair complex"/>
    <property type="evidence" value="ECO:0000318"/>
    <property type="project" value="GO_Central"/>
</dbReference>
<dbReference type="GO" id="GO:0003677">
    <property type="term" value="F:DNA binding"/>
    <property type="evidence" value="ECO:0007669"/>
    <property type="project" value="UniProtKB-UniRule"/>
</dbReference>
<dbReference type="GO" id="GO:0009381">
    <property type="term" value="F:excinuclease ABC activity"/>
    <property type="evidence" value="ECO:0007669"/>
    <property type="project" value="UniProtKB-UniRule"/>
</dbReference>
<dbReference type="GO" id="GO:0006974">
    <property type="term" value="P:DNA damage response"/>
    <property type="evidence" value="ECO:0000318"/>
    <property type="project" value="GO_Central"/>
</dbReference>
<dbReference type="GO" id="GO:0006289">
    <property type="term" value="P:nucleotide-excision repair"/>
    <property type="evidence" value="ECO:0007669"/>
    <property type="project" value="UniProtKB-UniRule"/>
</dbReference>
<dbReference type="GO" id="GO:0009432">
    <property type="term" value="P:SOS response"/>
    <property type="evidence" value="ECO:0007669"/>
    <property type="project" value="UniProtKB-UniRule"/>
</dbReference>
<dbReference type="CDD" id="cd10434">
    <property type="entry name" value="GIY-YIG_UvrC_Cho"/>
    <property type="match status" value="1"/>
</dbReference>
<dbReference type="FunFam" id="1.10.150.20:FF:000005">
    <property type="entry name" value="UvrABC system protein C"/>
    <property type="match status" value="1"/>
</dbReference>
<dbReference type="FunFam" id="3.30.420.340:FF:000002">
    <property type="entry name" value="UvrABC system protein C"/>
    <property type="match status" value="1"/>
</dbReference>
<dbReference type="FunFam" id="3.40.1440.10:FF:000001">
    <property type="entry name" value="UvrABC system protein C"/>
    <property type="match status" value="1"/>
</dbReference>
<dbReference type="FunFam" id="4.10.860.10:FF:000002">
    <property type="entry name" value="UvrABC system protein C"/>
    <property type="match status" value="1"/>
</dbReference>
<dbReference type="Gene3D" id="1.10.150.20">
    <property type="entry name" value="5' to 3' exonuclease, C-terminal subdomain"/>
    <property type="match status" value="1"/>
</dbReference>
<dbReference type="Gene3D" id="3.40.1440.10">
    <property type="entry name" value="GIY-YIG endonuclease"/>
    <property type="match status" value="1"/>
</dbReference>
<dbReference type="Gene3D" id="4.10.860.10">
    <property type="entry name" value="UVR domain"/>
    <property type="match status" value="1"/>
</dbReference>
<dbReference type="Gene3D" id="3.30.420.340">
    <property type="entry name" value="UvrC, RNAse H endonuclease domain"/>
    <property type="match status" value="1"/>
</dbReference>
<dbReference type="HAMAP" id="MF_00203">
    <property type="entry name" value="UvrC"/>
    <property type="match status" value="1"/>
</dbReference>
<dbReference type="InterPro" id="IPR000305">
    <property type="entry name" value="GIY-YIG_endonuc"/>
</dbReference>
<dbReference type="InterPro" id="IPR035901">
    <property type="entry name" value="GIY-YIG_endonuc_sf"/>
</dbReference>
<dbReference type="InterPro" id="IPR047296">
    <property type="entry name" value="GIY-YIG_UvrC_Cho"/>
</dbReference>
<dbReference type="InterPro" id="IPR010994">
    <property type="entry name" value="RuvA_2-like"/>
</dbReference>
<dbReference type="InterPro" id="IPR001943">
    <property type="entry name" value="UVR_dom"/>
</dbReference>
<dbReference type="InterPro" id="IPR036876">
    <property type="entry name" value="UVR_dom_sf"/>
</dbReference>
<dbReference type="InterPro" id="IPR050066">
    <property type="entry name" value="UvrABC_protein_C"/>
</dbReference>
<dbReference type="InterPro" id="IPR004791">
    <property type="entry name" value="UvrC"/>
</dbReference>
<dbReference type="InterPro" id="IPR001162">
    <property type="entry name" value="UvrC_RNase_H_dom"/>
</dbReference>
<dbReference type="InterPro" id="IPR038476">
    <property type="entry name" value="UvrC_RNase_H_dom_sf"/>
</dbReference>
<dbReference type="NCBIfam" id="NF001824">
    <property type="entry name" value="PRK00558.1-5"/>
    <property type="match status" value="1"/>
</dbReference>
<dbReference type="NCBIfam" id="TIGR00194">
    <property type="entry name" value="uvrC"/>
    <property type="match status" value="1"/>
</dbReference>
<dbReference type="PANTHER" id="PTHR30562:SF1">
    <property type="entry name" value="UVRABC SYSTEM PROTEIN C"/>
    <property type="match status" value="1"/>
</dbReference>
<dbReference type="PANTHER" id="PTHR30562">
    <property type="entry name" value="UVRC/OXIDOREDUCTASE"/>
    <property type="match status" value="1"/>
</dbReference>
<dbReference type="Pfam" id="PF01541">
    <property type="entry name" value="GIY-YIG"/>
    <property type="match status" value="1"/>
</dbReference>
<dbReference type="Pfam" id="PF14520">
    <property type="entry name" value="HHH_5"/>
    <property type="match status" value="1"/>
</dbReference>
<dbReference type="Pfam" id="PF02151">
    <property type="entry name" value="UVR"/>
    <property type="match status" value="1"/>
</dbReference>
<dbReference type="Pfam" id="PF22920">
    <property type="entry name" value="UvrC_RNaseH"/>
    <property type="match status" value="1"/>
</dbReference>
<dbReference type="Pfam" id="PF08459">
    <property type="entry name" value="UvrC_RNaseH_dom"/>
    <property type="match status" value="1"/>
</dbReference>
<dbReference type="SMART" id="SM00465">
    <property type="entry name" value="GIYc"/>
    <property type="match status" value="1"/>
</dbReference>
<dbReference type="SUPFAM" id="SSF46600">
    <property type="entry name" value="C-terminal UvrC-binding domain of UvrB"/>
    <property type="match status" value="1"/>
</dbReference>
<dbReference type="SUPFAM" id="SSF82771">
    <property type="entry name" value="GIY-YIG endonuclease"/>
    <property type="match status" value="1"/>
</dbReference>
<dbReference type="SUPFAM" id="SSF47781">
    <property type="entry name" value="RuvA domain 2-like"/>
    <property type="match status" value="1"/>
</dbReference>
<dbReference type="PROSITE" id="PS50164">
    <property type="entry name" value="GIY_YIG"/>
    <property type="match status" value="1"/>
</dbReference>
<dbReference type="PROSITE" id="PS50151">
    <property type="entry name" value="UVR"/>
    <property type="match status" value="1"/>
</dbReference>
<dbReference type="PROSITE" id="PS50165">
    <property type="entry name" value="UVRC"/>
    <property type="match status" value="1"/>
</dbReference>
<comment type="function">
    <text evidence="1">The UvrABC repair system catalyzes the recognition and processing of DNA lesions. UvrC both incises the 5' and 3' sides of the lesion. The N-terminal half is responsible for the 3' incision and the C-terminal half is responsible for the 5' incision.</text>
</comment>
<comment type="subunit">
    <text evidence="1">Interacts with UvrB in an incision complex.</text>
</comment>
<comment type="subcellular location">
    <subcellularLocation>
        <location evidence="1">Cytoplasm</location>
    </subcellularLocation>
</comment>
<comment type="similarity">
    <text evidence="1">Belongs to the UvrC family.</text>
</comment>
<keyword id="KW-0963">Cytoplasm</keyword>
<keyword id="KW-0227">DNA damage</keyword>
<keyword id="KW-0228">DNA excision</keyword>
<keyword id="KW-0234">DNA repair</keyword>
<keyword id="KW-0267">Excision nuclease</keyword>
<keyword id="KW-1185">Reference proteome</keyword>
<keyword id="KW-0742">SOS response</keyword>
<gene>
    <name evidence="1" type="primary">uvrC</name>
    <name type="ordered locus">BSU28490</name>
</gene>
<accession>P14951</accession>
<protein>
    <recommendedName>
        <fullName evidence="1">UvrABC system protein C</fullName>
        <shortName evidence="1">Protein UvrC</shortName>
    </recommendedName>
    <alternativeName>
        <fullName evidence="1">Excinuclease ABC subunit C</fullName>
    </alternativeName>
</protein>
<feature type="chain" id="PRO_0000138288" description="UvrABC system protein C">
    <location>
        <begin position="1"/>
        <end position="590"/>
    </location>
</feature>
<feature type="domain" description="GIY-YIG" evidence="1">
    <location>
        <begin position="14"/>
        <end position="91"/>
    </location>
</feature>
<feature type="domain" description="UVR" evidence="1">
    <location>
        <begin position="196"/>
        <end position="231"/>
    </location>
</feature>
<feature type="sequence conflict" description="In Ref. 1; AAA87316 and 2; CAA99578." evidence="2" ref="1 2">
    <original>E</original>
    <variation>V</variation>
    <location>
        <position position="382"/>
    </location>
</feature>
<feature type="sequence conflict" description="In Ref. 1; AAA87316 and 2; CAA99578." evidence="2" ref="1 2">
    <original>AAAAQLLYDKLQK</original>
    <variation>QRRLSSFTTNCKNNVVLLNKI</variation>
    <location>
        <begin position="578"/>
        <end position="590"/>
    </location>
</feature>
<proteinExistence type="inferred from homology"/>
<reference key="1">
    <citation type="journal article" date="1989" name="J. Gen. Microbiol.">
        <title>Chromosomal location of the Bacillus subtilis aspartokinase II gene and nucleotide sequence of the adjacent genes homologous to uvrC and trx of Escherichia coli.</title>
        <authorList>
            <person name="Chen N.-Y."/>
            <person name="Zhang J.-J."/>
            <person name="Paulus H."/>
        </authorList>
    </citation>
    <scope>NUCLEOTIDE SEQUENCE [GENOMIC DNA]</scope>
</reference>
<reference key="2">
    <citation type="journal article" date="1996" name="Microbiology">
        <title>The dnaB-pheA (256 degrees-240 degrees) region of the Bacillus subtilis chromosome containing genes responsible for stress responses, the utilization of plant cell walls and primary metabolism.</title>
        <authorList>
            <person name="Wipat A."/>
            <person name="Carter N."/>
            <person name="Brignell C.S."/>
            <person name="Guy J.B."/>
            <person name="Piper K."/>
            <person name="Sanders J."/>
            <person name="Emmerson P.T."/>
            <person name="Harwood C.R."/>
        </authorList>
    </citation>
    <scope>NUCLEOTIDE SEQUENCE [GENOMIC DNA]</scope>
    <source>
        <strain>168</strain>
    </source>
</reference>
<reference key="3">
    <citation type="journal article" date="1997" name="Nature">
        <title>The complete genome sequence of the Gram-positive bacterium Bacillus subtilis.</title>
        <authorList>
            <person name="Kunst F."/>
            <person name="Ogasawara N."/>
            <person name="Moszer I."/>
            <person name="Albertini A.M."/>
            <person name="Alloni G."/>
            <person name="Azevedo V."/>
            <person name="Bertero M.G."/>
            <person name="Bessieres P."/>
            <person name="Bolotin A."/>
            <person name="Borchert S."/>
            <person name="Borriss R."/>
            <person name="Boursier L."/>
            <person name="Brans A."/>
            <person name="Braun M."/>
            <person name="Brignell S.C."/>
            <person name="Bron S."/>
            <person name="Brouillet S."/>
            <person name="Bruschi C.V."/>
            <person name="Caldwell B."/>
            <person name="Capuano V."/>
            <person name="Carter N.M."/>
            <person name="Choi S.-K."/>
            <person name="Codani J.-J."/>
            <person name="Connerton I.F."/>
            <person name="Cummings N.J."/>
            <person name="Daniel R.A."/>
            <person name="Denizot F."/>
            <person name="Devine K.M."/>
            <person name="Duesterhoeft A."/>
            <person name="Ehrlich S.D."/>
            <person name="Emmerson P.T."/>
            <person name="Entian K.-D."/>
            <person name="Errington J."/>
            <person name="Fabret C."/>
            <person name="Ferrari E."/>
            <person name="Foulger D."/>
            <person name="Fritz C."/>
            <person name="Fujita M."/>
            <person name="Fujita Y."/>
            <person name="Fuma S."/>
            <person name="Galizzi A."/>
            <person name="Galleron N."/>
            <person name="Ghim S.-Y."/>
            <person name="Glaser P."/>
            <person name="Goffeau A."/>
            <person name="Golightly E.J."/>
            <person name="Grandi G."/>
            <person name="Guiseppi G."/>
            <person name="Guy B.J."/>
            <person name="Haga K."/>
            <person name="Haiech J."/>
            <person name="Harwood C.R."/>
            <person name="Henaut A."/>
            <person name="Hilbert H."/>
            <person name="Holsappel S."/>
            <person name="Hosono S."/>
            <person name="Hullo M.-F."/>
            <person name="Itaya M."/>
            <person name="Jones L.-M."/>
            <person name="Joris B."/>
            <person name="Karamata D."/>
            <person name="Kasahara Y."/>
            <person name="Klaerr-Blanchard M."/>
            <person name="Klein C."/>
            <person name="Kobayashi Y."/>
            <person name="Koetter P."/>
            <person name="Koningstein G."/>
            <person name="Krogh S."/>
            <person name="Kumano M."/>
            <person name="Kurita K."/>
            <person name="Lapidus A."/>
            <person name="Lardinois S."/>
            <person name="Lauber J."/>
            <person name="Lazarevic V."/>
            <person name="Lee S.-M."/>
            <person name="Levine A."/>
            <person name="Liu H."/>
            <person name="Masuda S."/>
            <person name="Mauel C."/>
            <person name="Medigue C."/>
            <person name="Medina N."/>
            <person name="Mellado R.P."/>
            <person name="Mizuno M."/>
            <person name="Moestl D."/>
            <person name="Nakai S."/>
            <person name="Noback M."/>
            <person name="Noone D."/>
            <person name="O'Reilly M."/>
            <person name="Ogawa K."/>
            <person name="Ogiwara A."/>
            <person name="Oudega B."/>
            <person name="Park S.-H."/>
            <person name="Parro V."/>
            <person name="Pohl T.M."/>
            <person name="Portetelle D."/>
            <person name="Porwollik S."/>
            <person name="Prescott A.M."/>
            <person name="Presecan E."/>
            <person name="Pujic P."/>
            <person name="Purnelle B."/>
            <person name="Rapoport G."/>
            <person name="Rey M."/>
            <person name="Reynolds S."/>
            <person name="Rieger M."/>
            <person name="Rivolta C."/>
            <person name="Rocha E."/>
            <person name="Roche B."/>
            <person name="Rose M."/>
            <person name="Sadaie Y."/>
            <person name="Sato T."/>
            <person name="Scanlan E."/>
            <person name="Schleich S."/>
            <person name="Schroeter R."/>
            <person name="Scoffone F."/>
            <person name="Sekiguchi J."/>
            <person name="Sekowska A."/>
            <person name="Seror S.J."/>
            <person name="Serror P."/>
            <person name="Shin B.-S."/>
            <person name="Soldo B."/>
            <person name="Sorokin A."/>
            <person name="Tacconi E."/>
            <person name="Takagi T."/>
            <person name="Takahashi H."/>
            <person name="Takemaru K."/>
            <person name="Takeuchi M."/>
            <person name="Tamakoshi A."/>
            <person name="Tanaka T."/>
            <person name="Terpstra P."/>
            <person name="Tognoni A."/>
            <person name="Tosato V."/>
            <person name="Uchiyama S."/>
            <person name="Vandenbol M."/>
            <person name="Vannier F."/>
            <person name="Vassarotti A."/>
            <person name="Viari A."/>
            <person name="Wambutt R."/>
            <person name="Wedler E."/>
            <person name="Wedler H."/>
            <person name="Weitzenegger T."/>
            <person name="Winters P."/>
            <person name="Wipat A."/>
            <person name="Yamamoto H."/>
            <person name="Yamane K."/>
            <person name="Yasumoto K."/>
            <person name="Yata K."/>
            <person name="Yoshida K."/>
            <person name="Yoshikawa H.-F."/>
            <person name="Zumstein E."/>
            <person name="Yoshikawa H."/>
            <person name="Danchin A."/>
        </authorList>
    </citation>
    <scope>NUCLEOTIDE SEQUENCE [LARGE SCALE GENOMIC DNA]</scope>
    <source>
        <strain>168</strain>
    </source>
</reference>
<reference key="4">
    <citation type="journal article" date="2009" name="Microbiology">
        <title>From a consortium sequence to a unified sequence: the Bacillus subtilis 168 reference genome a decade later.</title>
        <authorList>
            <person name="Barbe V."/>
            <person name="Cruveiller S."/>
            <person name="Kunst F."/>
            <person name="Lenoble P."/>
            <person name="Meurice G."/>
            <person name="Sekowska A."/>
            <person name="Vallenet D."/>
            <person name="Wang T."/>
            <person name="Moszer I."/>
            <person name="Medigue C."/>
            <person name="Danchin A."/>
        </authorList>
    </citation>
    <scope>SEQUENCE REVISION TO 382 AND C-TERMINUS</scope>
</reference>
<name>UVRC_BACSU</name>
<sequence>MNKQLKEKLALLPDQPGCYLMKDRQQTVIYVGKAKVLKNRVRSYFTGSHDAKTQRLVTEIEDFEYIVTSSNLEALILEMNLIKKHDPKYNVMLKDDKTYPFIKLTHERHPRLIVTRNVKKDKGRYFGPYPNVQAARETKKLLDRLYPLRKCSKLPDRVCLYYHLGQCLAPCVKDISEETNRELVESITRFLRGGYNEVKKELEEKMHEAAENLEFERAKELRDQIAHIESTMEKQKMTMNDLVDRDVFAYAYDKGWMCVQVFFIRQGKLIERDVSMFPLYQEADEEFLTFIGQFYSKNNHFLPKEILVPDSIDQSMIEQLLETNVHQPKKGPKKELLMLAHKNAKIALKEKFSLIERDEERSIGAVQKLGEALNIYTPHRIEAFDNSNIQGTNPVSAMIVFIDGKPYKKEYRKYKIKTVTGPDDYGSMREVVRRRYTRVLRENLPLPDLIIIDGGKGQINAARDVIENELGLDIPIAGLAKDEKHRTSNLLIGDPLEVAYLERNSQEFYLLQRIQDEVHRFAISFHRQIRGKSAFQSVLDDIPGIGEKRKKMLLKHFGSVKKMKEASLEDIKKAGVPAAAAQLLYDKLQK</sequence>
<organism>
    <name type="scientific">Bacillus subtilis (strain 168)</name>
    <dbReference type="NCBI Taxonomy" id="224308"/>
    <lineage>
        <taxon>Bacteria</taxon>
        <taxon>Bacillati</taxon>
        <taxon>Bacillota</taxon>
        <taxon>Bacilli</taxon>
        <taxon>Bacillales</taxon>
        <taxon>Bacillaceae</taxon>
        <taxon>Bacillus</taxon>
    </lineage>
</organism>